<gene>
    <name evidence="1" type="primary">queC</name>
    <name type="ordered locus">Bd2231</name>
</gene>
<evidence type="ECO:0000255" key="1">
    <source>
        <dbReference type="HAMAP-Rule" id="MF_01633"/>
    </source>
</evidence>
<sequence>MKKNKKVVVLLSAGLDSTVNAYEAIKHHHEIVLALTFNYGQRAAKKELEASANIAKHLGIPHKVVELPWFKDFNKSSLLVEDQAVPTGSAVEIDNQQKSEETAKSVWVPNRNGIFLNIAAAYAEALGADAVIPGFNAEEAATFPDNSREFLEQATKSLWYSTSNHVTVGCYTAHLKKPDIVRLGQGLKVPWELIWPCYFSGDKWCGQCESCLRSKRAFASANIDVKHLFKE</sequence>
<reference key="1">
    <citation type="journal article" date="2004" name="Science">
        <title>A predator unmasked: life cycle of Bdellovibrio bacteriovorus from a genomic perspective.</title>
        <authorList>
            <person name="Rendulic S."/>
            <person name="Jagtap P."/>
            <person name="Rosinus A."/>
            <person name="Eppinger M."/>
            <person name="Baar C."/>
            <person name="Lanz C."/>
            <person name="Keller H."/>
            <person name="Lambert C."/>
            <person name="Evans K.J."/>
            <person name="Goesmann A."/>
            <person name="Meyer F."/>
            <person name="Sockett R.E."/>
            <person name="Schuster S.C."/>
        </authorList>
    </citation>
    <scope>NUCLEOTIDE SEQUENCE [LARGE SCALE GENOMIC DNA]</scope>
    <source>
        <strain>ATCC 15356 / DSM 50701 / NCIMB 9529 / HD100</strain>
    </source>
</reference>
<name>QUEC_BDEBA</name>
<organism>
    <name type="scientific">Bdellovibrio bacteriovorus (strain ATCC 15356 / DSM 50701 / NCIMB 9529 / HD100)</name>
    <dbReference type="NCBI Taxonomy" id="264462"/>
    <lineage>
        <taxon>Bacteria</taxon>
        <taxon>Pseudomonadati</taxon>
        <taxon>Bdellovibrionota</taxon>
        <taxon>Bdellovibrionia</taxon>
        <taxon>Bdellovibrionales</taxon>
        <taxon>Pseudobdellovibrionaceae</taxon>
        <taxon>Bdellovibrio</taxon>
    </lineage>
</organism>
<protein>
    <recommendedName>
        <fullName evidence="1">7-cyano-7-deazaguanine synthase</fullName>
        <ecNumber evidence="1">6.3.4.20</ecNumber>
    </recommendedName>
    <alternativeName>
        <fullName evidence="1">7-cyano-7-carbaguanine synthase</fullName>
    </alternativeName>
    <alternativeName>
        <fullName evidence="1">PreQ(0) synthase</fullName>
    </alternativeName>
    <alternativeName>
        <fullName evidence="1">Queuosine biosynthesis protein QueC</fullName>
    </alternativeName>
</protein>
<feature type="chain" id="PRO_0000246807" description="7-cyano-7-deazaguanine synthase">
    <location>
        <begin position="1"/>
        <end position="231"/>
    </location>
</feature>
<feature type="binding site" evidence="1">
    <location>
        <begin position="11"/>
        <end position="21"/>
    </location>
    <ligand>
        <name>ATP</name>
        <dbReference type="ChEBI" id="CHEBI:30616"/>
    </ligand>
</feature>
<feature type="binding site" evidence="1">
    <location>
        <position position="197"/>
    </location>
    <ligand>
        <name>Zn(2+)</name>
        <dbReference type="ChEBI" id="CHEBI:29105"/>
    </ligand>
</feature>
<feature type="binding site" evidence="1">
    <location>
        <position position="205"/>
    </location>
    <ligand>
        <name>Zn(2+)</name>
        <dbReference type="ChEBI" id="CHEBI:29105"/>
    </ligand>
</feature>
<feature type="binding site" evidence="1">
    <location>
        <position position="208"/>
    </location>
    <ligand>
        <name>Zn(2+)</name>
        <dbReference type="ChEBI" id="CHEBI:29105"/>
    </ligand>
</feature>
<feature type="binding site" evidence="1">
    <location>
        <position position="211"/>
    </location>
    <ligand>
        <name>Zn(2+)</name>
        <dbReference type="ChEBI" id="CHEBI:29105"/>
    </ligand>
</feature>
<proteinExistence type="inferred from homology"/>
<accession>Q6MKZ5</accession>
<keyword id="KW-0067">ATP-binding</keyword>
<keyword id="KW-0436">Ligase</keyword>
<keyword id="KW-0479">Metal-binding</keyword>
<keyword id="KW-0547">Nucleotide-binding</keyword>
<keyword id="KW-0671">Queuosine biosynthesis</keyword>
<keyword id="KW-1185">Reference proteome</keyword>
<keyword id="KW-0862">Zinc</keyword>
<dbReference type="EC" id="6.3.4.20" evidence="1"/>
<dbReference type="EMBL" id="BX842652">
    <property type="protein sequence ID" value="CAE80062.1"/>
    <property type="molecule type" value="Genomic_DNA"/>
</dbReference>
<dbReference type="RefSeq" id="WP_011164664.1">
    <property type="nucleotide sequence ID" value="NC_005363.1"/>
</dbReference>
<dbReference type="SMR" id="Q6MKZ5"/>
<dbReference type="STRING" id="264462.Bd2231"/>
<dbReference type="GeneID" id="93013164"/>
<dbReference type="KEGG" id="bba:Bd2231"/>
<dbReference type="eggNOG" id="COG0603">
    <property type="taxonomic scope" value="Bacteria"/>
</dbReference>
<dbReference type="HOGENOM" id="CLU_081854_1_0_7"/>
<dbReference type="UniPathway" id="UPA00391"/>
<dbReference type="Proteomes" id="UP000008080">
    <property type="component" value="Chromosome"/>
</dbReference>
<dbReference type="GO" id="GO:0005524">
    <property type="term" value="F:ATP binding"/>
    <property type="evidence" value="ECO:0007669"/>
    <property type="project" value="UniProtKB-UniRule"/>
</dbReference>
<dbReference type="GO" id="GO:0016879">
    <property type="term" value="F:ligase activity, forming carbon-nitrogen bonds"/>
    <property type="evidence" value="ECO:0007669"/>
    <property type="project" value="UniProtKB-UniRule"/>
</dbReference>
<dbReference type="GO" id="GO:0008270">
    <property type="term" value="F:zinc ion binding"/>
    <property type="evidence" value="ECO:0007669"/>
    <property type="project" value="UniProtKB-UniRule"/>
</dbReference>
<dbReference type="GO" id="GO:0008616">
    <property type="term" value="P:queuosine biosynthetic process"/>
    <property type="evidence" value="ECO:0007669"/>
    <property type="project" value="UniProtKB-UniRule"/>
</dbReference>
<dbReference type="CDD" id="cd01995">
    <property type="entry name" value="QueC-like"/>
    <property type="match status" value="1"/>
</dbReference>
<dbReference type="Gene3D" id="3.40.50.620">
    <property type="entry name" value="HUPs"/>
    <property type="match status" value="1"/>
</dbReference>
<dbReference type="HAMAP" id="MF_01633">
    <property type="entry name" value="QueC"/>
    <property type="match status" value="1"/>
</dbReference>
<dbReference type="InterPro" id="IPR018317">
    <property type="entry name" value="QueC"/>
</dbReference>
<dbReference type="InterPro" id="IPR014729">
    <property type="entry name" value="Rossmann-like_a/b/a_fold"/>
</dbReference>
<dbReference type="NCBIfam" id="TIGR00364">
    <property type="entry name" value="7-cyano-7-deazaguanine synthase QueC"/>
    <property type="match status" value="1"/>
</dbReference>
<dbReference type="PANTHER" id="PTHR42914">
    <property type="entry name" value="7-CYANO-7-DEAZAGUANINE SYNTHASE"/>
    <property type="match status" value="1"/>
</dbReference>
<dbReference type="PANTHER" id="PTHR42914:SF1">
    <property type="entry name" value="7-CYANO-7-DEAZAGUANINE SYNTHASE"/>
    <property type="match status" value="1"/>
</dbReference>
<dbReference type="Pfam" id="PF06508">
    <property type="entry name" value="QueC"/>
    <property type="match status" value="1"/>
</dbReference>
<dbReference type="PIRSF" id="PIRSF006293">
    <property type="entry name" value="ExsB"/>
    <property type="match status" value="1"/>
</dbReference>
<dbReference type="SUPFAM" id="SSF52402">
    <property type="entry name" value="Adenine nucleotide alpha hydrolases-like"/>
    <property type="match status" value="1"/>
</dbReference>
<comment type="function">
    <text evidence="1">Catalyzes the ATP-dependent conversion of 7-carboxy-7-deazaguanine (CDG) to 7-cyano-7-deazaguanine (preQ(0)).</text>
</comment>
<comment type="catalytic activity">
    <reaction evidence="1">
        <text>7-carboxy-7-deazaguanine + NH4(+) + ATP = 7-cyano-7-deazaguanine + ADP + phosphate + H2O + H(+)</text>
        <dbReference type="Rhea" id="RHEA:27982"/>
        <dbReference type="ChEBI" id="CHEBI:15377"/>
        <dbReference type="ChEBI" id="CHEBI:15378"/>
        <dbReference type="ChEBI" id="CHEBI:28938"/>
        <dbReference type="ChEBI" id="CHEBI:30616"/>
        <dbReference type="ChEBI" id="CHEBI:43474"/>
        <dbReference type="ChEBI" id="CHEBI:45075"/>
        <dbReference type="ChEBI" id="CHEBI:61036"/>
        <dbReference type="ChEBI" id="CHEBI:456216"/>
        <dbReference type="EC" id="6.3.4.20"/>
    </reaction>
</comment>
<comment type="cofactor">
    <cofactor evidence="1">
        <name>Zn(2+)</name>
        <dbReference type="ChEBI" id="CHEBI:29105"/>
    </cofactor>
    <text evidence="1">Binds 1 zinc ion per subunit.</text>
</comment>
<comment type="pathway">
    <text evidence="1">Purine metabolism; 7-cyano-7-deazaguanine biosynthesis.</text>
</comment>
<comment type="similarity">
    <text evidence="1">Belongs to the QueC family.</text>
</comment>